<comment type="function">
    <text evidence="2">Displays esterase activity towards short chain fatty esters (acyl chain length of up to 8 carbons). Able to hydrolyze triacetylglycerol (triacetin) and tributyrylglycerol (tributyrin), but not trioleylglycerol (triolein) or cholesterol oleate. Negatively regulates MalT activity by antagonizing maltotriose binding. Inhibits MelA galactosidase activity.</text>
</comment>
<comment type="subunit">
    <text evidence="2">Homodimer. Interacts with MalT and MelA.</text>
</comment>
<comment type="subcellular location">
    <subcellularLocation>
        <location evidence="2">Cytoplasm</location>
    </subcellularLocation>
</comment>
<comment type="similarity">
    <text evidence="2">Belongs to the 'GDXG' lipolytic enzyme family.</text>
</comment>
<protein>
    <recommendedName>
        <fullName evidence="2">Acetyl esterase</fullName>
        <ecNumber evidence="2">3.1.1.-</ecNumber>
    </recommendedName>
</protein>
<organism>
    <name type="scientific">Escherichia coli O17:K52:H18 (strain UMN026 / ExPEC)</name>
    <dbReference type="NCBI Taxonomy" id="585056"/>
    <lineage>
        <taxon>Bacteria</taxon>
        <taxon>Pseudomonadati</taxon>
        <taxon>Pseudomonadota</taxon>
        <taxon>Gammaproteobacteria</taxon>
        <taxon>Enterobacterales</taxon>
        <taxon>Enterobacteriaceae</taxon>
        <taxon>Escherichia</taxon>
    </lineage>
</organism>
<evidence type="ECO:0000250" key="1">
    <source>
        <dbReference type="UniProtKB" id="Q5NUF3"/>
    </source>
</evidence>
<evidence type="ECO:0000255" key="2">
    <source>
        <dbReference type="HAMAP-Rule" id="MF_01958"/>
    </source>
</evidence>
<name>AES_ECOLU</name>
<gene>
    <name evidence="2" type="primary">aes</name>
    <name type="ordered locus">ECUMN_0515</name>
</gene>
<reference key="1">
    <citation type="journal article" date="2009" name="PLoS Genet.">
        <title>Organised genome dynamics in the Escherichia coli species results in highly diverse adaptive paths.</title>
        <authorList>
            <person name="Touchon M."/>
            <person name="Hoede C."/>
            <person name="Tenaillon O."/>
            <person name="Barbe V."/>
            <person name="Baeriswyl S."/>
            <person name="Bidet P."/>
            <person name="Bingen E."/>
            <person name="Bonacorsi S."/>
            <person name="Bouchier C."/>
            <person name="Bouvet O."/>
            <person name="Calteau A."/>
            <person name="Chiapello H."/>
            <person name="Clermont O."/>
            <person name="Cruveiller S."/>
            <person name="Danchin A."/>
            <person name="Diard M."/>
            <person name="Dossat C."/>
            <person name="Karoui M.E."/>
            <person name="Frapy E."/>
            <person name="Garry L."/>
            <person name="Ghigo J.M."/>
            <person name="Gilles A.M."/>
            <person name="Johnson J."/>
            <person name="Le Bouguenec C."/>
            <person name="Lescat M."/>
            <person name="Mangenot S."/>
            <person name="Martinez-Jehanne V."/>
            <person name="Matic I."/>
            <person name="Nassif X."/>
            <person name="Oztas S."/>
            <person name="Petit M.A."/>
            <person name="Pichon C."/>
            <person name="Rouy Z."/>
            <person name="Ruf C.S."/>
            <person name="Schneider D."/>
            <person name="Tourret J."/>
            <person name="Vacherie B."/>
            <person name="Vallenet D."/>
            <person name="Medigue C."/>
            <person name="Rocha E.P.C."/>
            <person name="Denamur E."/>
        </authorList>
    </citation>
    <scope>NUCLEOTIDE SEQUENCE [LARGE SCALE GENOMIC DNA]</scope>
    <source>
        <strain>UMN026 / ExPEC</strain>
    </source>
</reference>
<proteinExistence type="inferred from homology"/>
<feature type="chain" id="PRO_1000188986" description="Acetyl esterase">
    <location>
        <begin position="1"/>
        <end position="319"/>
    </location>
</feature>
<feature type="short sequence motif" description="Involved in the stabilization of the negatively charged intermediate by the formation of the oxyanion hole" evidence="1">
    <location>
        <begin position="91"/>
        <end position="93"/>
    </location>
</feature>
<feature type="active site" evidence="2">
    <location>
        <position position="165"/>
    </location>
</feature>
<feature type="active site" evidence="2">
    <location>
        <position position="262"/>
    </location>
</feature>
<feature type="active site" evidence="2">
    <location>
        <position position="292"/>
    </location>
</feature>
<sequence>MKPEKKLPVLDLISAEMKTVVNTLQPDLPPWPATGTIAEQRQYYTLERRFWNAGAPEMATRAYMVPTKYGQVETRLFCPQPDSPATLFYLHGGGFILGNLDTHDRIMRLLASYSQCTVIGIDYTLSPEARFPQAIEEIVAACCYFHQQAEDYQINMSRIGFAGDSAGAMLALASALWLRDKQIDCGKVAGVLLWYGLYGLRDSVTRRLLGGVWDGLTQQDLQMYEEAYLSNDADRESPYYCLFNNDLTREVPPCFIAGAEFDPLLDDSRLLYQTLAAHQQPCEFKLYPGTLHAFLHYSRMMKTADEALRDGAQFFTAQL</sequence>
<keyword id="KW-0963">Cytoplasm</keyword>
<keyword id="KW-0378">Hydrolase</keyword>
<keyword id="KW-0719">Serine esterase</keyword>
<dbReference type="EC" id="3.1.1.-" evidence="2"/>
<dbReference type="EMBL" id="CU928163">
    <property type="protein sequence ID" value="CAR11730.1"/>
    <property type="molecule type" value="Genomic_DNA"/>
</dbReference>
<dbReference type="RefSeq" id="WP_000801694.1">
    <property type="nucleotide sequence ID" value="NC_011751.1"/>
</dbReference>
<dbReference type="RefSeq" id="YP_002411278.1">
    <property type="nucleotide sequence ID" value="NC_011751.1"/>
</dbReference>
<dbReference type="SMR" id="B7N929"/>
<dbReference type="STRING" id="585056.ECUMN_0515"/>
<dbReference type="ESTHER" id="ecoli-Aes">
    <property type="family name" value="Acetyl_esterase"/>
</dbReference>
<dbReference type="MEROPS" id="S09.A47"/>
<dbReference type="KEGG" id="eum:ECUMN_0515"/>
<dbReference type="PATRIC" id="fig|585056.7.peg.722"/>
<dbReference type="HOGENOM" id="CLU_012494_6_4_6"/>
<dbReference type="Proteomes" id="UP000007097">
    <property type="component" value="Chromosome"/>
</dbReference>
<dbReference type="GO" id="GO:0005737">
    <property type="term" value="C:cytoplasm"/>
    <property type="evidence" value="ECO:0007669"/>
    <property type="project" value="UniProtKB-SubCell"/>
</dbReference>
<dbReference type="GO" id="GO:0052689">
    <property type="term" value="F:carboxylic ester hydrolase activity"/>
    <property type="evidence" value="ECO:0007669"/>
    <property type="project" value="UniProtKB-UniRule"/>
</dbReference>
<dbReference type="FunFam" id="3.40.50.1820:FF:000035">
    <property type="entry name" value="Acetyl esterase"/>
    <property type="match status" value="1"/>
</dbReference>
<dbReference type="Gene3D" id="3.40.50.1820">
    <property type="entry name" value="alpha/beta hydrolase"/>
    <property type="match status" value="1"/>
</dbReference>
<dbReference type="HAMAP" id="MF_01958">
    <property type="entry name" value="Acetyl_esterase"/>
    <property type="match status" value="1"/>
</dbReference>
<dbReference type="InterPro" id="IPR013094">
    <property type="entry name" value="AB_hydrolase_3"/>
</dbReference>
<dbReference type="InterPro" id="IPR029058">
    <property type="entry name" value="AB_hydrolase_fold"/>
</dbReference>
<dbReference type="InterPro" id="IPR023508">
    <property type="entry name" value="Acetyl_esterase"/>
</dbReference>
<dbReference type="InterPro" id="IPR050300">
    <property type="entry name" value="GDXG_lipolytic_enzyme"/>
</dbReference>
<dbReference type="InterPro" id="IPR002168">
    <property type="entry name" value="Lipase_GDXG_HIS_AS"/>
</dbReference>
<dbReference type="InterPro" id="IPR033140">
    <property type="entry name" value="Lipase_GDXG_put_SER_AS"/>
</dbReference>
<dbReference type="NCBIfam" id="NF007547">
    <property type="entry name" value="PRK10162.1"/>
    <property type="match status" value="1"/>
</dbReference>
<dbReference type="PANTHER" id="PTHR48081">
    <property type="entry name" value="AB HYDROLASE SUPERFAMILY PROTEIN C4A8.06C"/>
    <property type="match status" value="1"/>
</dbReference>
<dbReference type="PANTHER" id="PTHR48081:SF8">
    <property type="entry name" value="ALPHA_BETA HYDROLASE FOLD-3 DOMAIN-CONTAINING PROTEIN-RELATED"/>
    <property type="match status" value="1"/>
</dbReference>
<dbReference type="Pfam" id="PF07859">
    <property type="entry name" value="Abhydrolase_3"/>
    <property type="match status" value="1"/>
</dbReference>
<dbReference type="SUPFAM" id="SSF53474">
    <property type="entry name" value="alpha/beta-Hydrolases"/>
    <property type="match status" value="1"/>
</dbReference>
<dbReference type="PROSITE" id="PS01173">
    <property type="entry name" value="LIPASE_GDXG_HIS"/>
    <property type="match status" value="1"/>
</dbReference>
<dbReference type="PROSITE" id="PS01174">
    <property type="entry name" value="LIPASE_GDXG_SER"/>
    <property type="match status" value="1"/>
</dbReference>
<accession>B7N929</accession>